<organism>
    <name type="scientific">Cronobacter sakazakii (strain ATCC BAA-894)</name>
    <name type="common">Enterobacter sakazakii</name>
    <dbReference type="NCBI Taxonomy" id="290339"/>
    <lineage>
        <taxon>Bacteria</taxon>
        <taxon>Pseudomonadati</taxon>
        <taxon>Pseudomonadota</taxon>
        <taxon>Gammaproteobacteria</taxon>
        <taxon>Enterobacterales</taxon>
        <taxon>Enterobacteriaceae</taxon>
        <taxon>Cronobacter</taxon>
    </lineage>
</organism>
<proteinExistence type="inferred from homology"/>
<reference key="1">
    <citation type="journal article" date="2010" name="PLoS ONE">
        <title>Genome sequence of Cronobacter sakazakii BAA-894 and comparative genomic hybridization analysis with other Cronobacter species.</title>
        <authorList>
            <person name="Kucerova E."/>
            <person name="Clifton S.W."/>
            <person name="Xia X.Q."/>
            <person name="Long F."/>
            <person name="Porwollik S."/>
            <person name="Fulton L."/>
            <person name="Fronick C."/>
            <person name="Minx P."/>
            <person name="Kyung K."/>
            <person name="Warren W."/>
            <person name="Fulton R."/>
            <person name="Feng D."/>
            <person name="Wollam A."/>
            <person name="Shah N."/>
            <person name="Bhonagiri V."/>
            <person name="Nash W.E."/>
            <person name="Hallsworth-Pepin K."/>
            <person name="Wilson R.K."/>
            <person name="McClelland M."/>
            <person name="Forsythe S.J."/>
        </authorList>
    </citation>
    <scope>NUCLEOTIDE SEQUENCE [LARGE SCALE GENOMIC DNA]</scope>
    <source>
        <strain>ATCC BAA-894</strain>
    </source>
</reference>
<evidence type="ECO:0000255" key="1">
    <source>
        <dbReference type="HAMAP-Rule" id="MF_00501"/>
    </source>
</evidence>
<evidence type="ECO:0000305" key="2"/>
<accession>A7ML80</accession>
<gene>
    <name evidence="1" type="primary">rpmE</name>
    <name type="ordered locus">ESA_03824</name>
</gene>
<name>RL31_CROS8</name>
<sequence>MKKDIHPKYVEITATCSCGNVIKTRSTVGHDLNLDVCGNCHPFFTGKQRVVDTGGRVERFNKRFSIPGSK</sequence>
<dbReference type="EMBL" id="CP000783">
    <property type="protein sequence ID" value="ABU79010.1"/>
    <property type="molecule type" value="Genomic_DNA"/>
</dbReference>
<dbReference type="RefSeq" id="WP_004385728.1">
    <property type="nucleotide sequence ID" value="NC_009778.1"/>
</dbReference>
<dbReference type="SMR" id="A7ML80"/>
<dbReference type="GeneID" id="92808228"/>
<dbReference type="KEGG" id="esa:ESA_03824"/>
<dbReference type="HOGENOM" id="CLU_114306_4_3_6"/>
<dbReference type="Proteomes" id="UP000000260">
    <property type="component" value="Chromosome"/>
</dbReference>
<dbReference type="GO" id="GO:1990904">
    <property type="term" value="C:ribonucleoprotein complex"/>
    <property type="evidence" value="ECO:0007669"/>
    <property type="project" value="UniProtKB-KW"/>
</dbReference>
<dbReference type="GO" id="GO:0005840">
    <property type="term" value="C:ribosome"/>
    <property type="evidence" value="ECO:0007669"/>
    <property type="project" value="UniProtKB-KW"/>
</dbReference>
<dbReference type="GO" id="GO:0046872">
    <property type="term" value="F:metal ion binding"/>
    <property type="evidence" value="ECO:0007669"/>
    <property type="project" value="UniProtKB-KW"/>
</dbReference>
<dbReference type="GO" id="GO:0019843">
    <property type="term" value="F:rRNA binding"/>
    <property type="evidence" value="ECO:0007669"/>
    <property type="project" value="UniProtKB-KW"/>
</dbReference>
<dbReference type="GO" id="GO:0003735">
    <property type="term" value="F:structural constituent of ribosome"/>
    <property type="evidence" value="ECO:0007669"/>
    <property type="project" value="InterPro"/>
</dbReference>
<dbReference type="GO" id="GO:0006412">
    <property type="term" value="P:translation"/>
    <property type="evidence" value="ECO:0007669"/>
    <property type="project" value="UniProtKB-UniRule"/>
</dbReference>
<dbReference type="FunFam" id="4.10.830.30:FF:000001">
    <property type="entry name" value="50S ribosomal protein L31"/>
    <property type="match status" value="1"/>
</dbReference>
<dbReference type="Gene3D" id="4.10.830.30">
    <property type="entry name" value="Ribosomal protein L31"/>
    <property type="match status" value="1"/>
</dbReference>
<dbReference type="HAMAP" id="MF_00501">
    <property type="entry name" value="Ribosomal_bL31_1"/>
    <property type="match status" value="1"/>
</dbReference>
<dbReference type="InterPro" id="IPR034704">
    <property type="entry name" value="Ribosomal_bL28/bL31-like_sf"/>
</dbReference>
<dbReference type="InterPro" id="IPR002150">
    <property type="entry name" value="Ribosomal_bL31"/>
</dbReference>
<dbReference type="InterPro" id="IPR027491">
    <property type="entry name" value="Ribosomal_bL31_A"/>
</dbReference>
<dbReference type="InterPro" id="IPR042105">
    <property type="entry name" value="Ribosomal_bL31_sf"/>
</dbReference>
<dbReference type="NCBIfam" id="TIGR00105">
    <property type="entry name" value="L31"/>
    <property type="match status" value="1"/>
</dbReference>
<dbReference type="NCBIfam" id="NF000612">
    <property type="entry name" value="PRK00019.1"/>
    <property type="match status" value="1"/>
</dbReference>
<dbReference type="NCBIfam" id="NF001809">
    <property type="entry name" value="PRK00528.1"/>
    <property type="match status" value="1"/>
</dbReference>
<dbReference type="PANTHER" id="PTHR33280">
    <property type="entry name" value="50S RIBOSOMAL PROTEIN L31, CHLOROPLASTIC"/>
    <property type="match status" value="1"/>
</dbReference>
<dbReference type="PANTHER" id="PTHR33280:SF6">
    <property type="entry name" value="LARGE RIBOSOMAL SUBUNIT PROTEIN BL31A"/>
    <property type="match status" value="1"/>
</dbReference>
<dbReference type="Pfam" id="PF01197">
    <property type="entry name" value="Ribosomal_L31"/>
    <property type="match status" value="1"/>
</dbReference>
<dbReference type="PRINTS" id="PR01249">
    <property type="entry name" value="RIBOSOMALL31"/>
</dbReference>
<dbReference type="SUPFAM" id="SSF143800">
    <property type="entry name" value="L28p-like"/>
    <property type="match status" value="1"/>
</dbReference>
<dbReference type="PROSITE" id="PS01143">
    <property type="entry name" value="RIBOSOMAL_L31"/>
    <property type="match status" value="1"/>
</dbReference>
<feature type="chain" id="PRO_1000126624" description="Large ribosomal subunit protein bL31">
    <location>
        <begin position="1"/>
        <end position="70"/>
    </location>
</feature>
<feature type="binding site" evidence="1">
    <location>
        <position position="16"/>
    </location>
    <ligand>
        <name>Zn(2+)</name>
        <dbReference type="ChEBI" id="CHEBI:29105"/>
    </ligand>
</feature>
<feature type="binding site" evidence="1">
    <location>
        <position position="18"/>
    </location>
    <ligand>
        <name>Zn(2+)</name>
        <dbReference type="ChEBI" id="CHEBI:29105"/>
    </ligand>
</feature>
<feature type="binding site" evidence="1">
    <location>
        <position position="37"/>
    </location>
    <ligand>
        <name>Zn(2+)</name>
        <dbReference type="ChEBI" id="CHEBI:29105"/>
    </ligand>
</feature>
<feature type="binding site" evidence="1">
    <location>
        <position position="40"/>
    </location>
    <ligand>
        <name>Zn(2+)</name>
        <dbReference type="ChEBI" id="CHEBI:29105"/>
    </ligand>
</feature>
<keyword id="KW-0479">Metal-binding</keyword>
<keyword id="KW-1185">Reference proteome</keyword>
<keyword id="KW-0687">Ribonucleoprotein</keyword>
<keyword id="KW-0689">Ribosomal protein</keyword>
<keyword id="KW-0694">RNA-binding</keyword>
<keyword id="KW-0699">rRNA-binding</keyword>
<keyword id="KW-0862">Zinc</keyword>
<comment type="function">
    <text evidence="1">Binds the 23S rRNA.</text>
</comment>
<comment type="cofactor">
    <cofactor evidence="1">
        <name>Zn(2+)</name>
        <dbReference type="ChEBI" id="CHEBI:29105"/>
    </cofactor>
    <text evidence="1">Binds 1 zinc ion per subunit.</text>
</comment>
<comment type="subunit">
    <text evidence="1">Part of the 50S ribosomal subunit.</text>
</comment>
<comment type="similarity">
    <text evidence="1">Belongs to the bacterial ribosomal protein bL31 family. Type A subfamily.</text>
</comment>
<protein>
    <recommendedName>
        <fullName evidence="1">Large ribosomal subunit protein bL31</fullName>
    </recommendedName>
    <alternativeName>
        <fullName evidence="2">50S ribosomal protein L31</fullName>
    </alternativeName>
</protein>